<gene>
    <name evidence="1" type="primary">clpS</name>
    <name type="ordered locus">Smal_1922</name>
</gene>
<name>CLPS_STRM5</name>
<evidence type="ECO:0000255" key="1">
    <source>
        <dbReference type="HAMAP-Rule" id="MF_00302"/>
    </source>
</evidence>
<evidence type="ECO:0000256" key="2">
    <source>
        <dbReference type="SAM" id="MobiDB-lite"/>
    </source>
</evidence>
<proteinExistence type="inferred from homology"/>
<sequence length="108" mass="12298">MPRESSPDSHHEHGVAVEPARPEVAPPPFYQVMLLNDDYTPMDFVVDVLQQFFTMDLDKATQVMLHVHTRGRGVCGVFTREVAETKVAQVNEYSRMNQHPLLCTMEKA</sequence>
<dbReference type="EMBL" id="CP001111">
    <property type="protein sequence ID" value="ACF51626.1"/>
    <property type="molecule type" value="Genomic_DNA"/>
</dbReference>
<dbReference type="RefSeq" id="WP_006366596.1">
    <property type="nucleotide sequence ID" value="NC_011071.1"/>
</dbReference>
<dbReference type="SMR" id="B4SIN7"/>
<dbReference type="STRING" id="391008.Smal_1922"/>
<dbReference type="KEGG" id="smt:Smal_1922"/>
<dbReference type="eggNOG" id="COG2127">
    <property type="taxonomic scope" value="Bacteria"/>
</dbReference>
<dbReference type="HOGENOM" id="CLU_134358_2_1_6"/>
<dbReference type="OrthoDB" id="9796121at2"/>
<dbReference type="Proteomes" id="UP000001867">
    <property type="component" value="Chromosome"/>
</dbReference>
<dbReference type="GO" id="GO:0030163">
    <property type="term" value="P:protein catabolic process"/>
    <property type="evidence" value="ECO:0007669"/>
    <property type="project" value="InterPro"/>
</dbReference>
<dbReference type="GO" id="GO:0006508">
    <property type="term" value="P:proteolysis"/>
    <property type="evidence" value="ECO:0007669"/>
    <property type="project" value="UniProtKB-UniRule"/>
</dbReference>
<dbReference type="FunFam" id="3.30.1390.10:FF:000002">
    <property type="entry name" value="ATP-dependent Clp protease adapter protein ClpS"/>
    <property type="match status" value="1"/>
</dbReference>
<dbReference type="Gene3D" id="3.30.1390.10">
    <property type="match status" value="1"/>
</dbReference>
<dbReference type="HAMAP" id="MF_00302">
    <property type="entry name" value="ClpS"/>
    <property type="match status" value="1"/>
</dbReference>
<dbReference type="InterPro" id="IPR022935">
    <property type="entry name" value="ClpS"/>
</dbReference>
<dbReference type="InterPro" id="IPR003769">
    <property type="entry name" value="ClpS_core"/>
</dbReference>
<dbReference type="InterPro" id="IPR014719">
    <property type="entry name" value="Ribosomal_bL12_C/ClpS-like"/>
</dbReference>
<dbReference type="NCBIfam" id="NF000669">
    <property type="entry name" value="PRK00033.1-2"/>
    <property type="match status" value="1"/>
</dbReference>
<dbReference type="NCBIfam" id="NF000670">
    <property type="entry name" value="PRK00033.1-3"/>
    <property type="match status" value="1"/>
</dbReference>
<dbReference type="NCBIfam" id="NF000672">
    <property type="entry name" value="PRK00033.1-5"/>
    <property type="match status" value="1"/>
</dbReference>
<dbReference type="PANTHER" id="PTHR33473:SF19">
    <property type="entry name" value="ATP-DEPENDENT CLP PROTEASE ADAPTER PROTEIN CLPS"/>
    <property type="match status" value="1"/>
</dbReference>
<dbReference type="PANTHER" id="PTHR33473">
    <property type="entry name" value="ATP-DEPENDENT CLP PROTEASE ADAPTER PROTEIN CLPS1, CHLOROPLASTIC"/>
    <property type="match status" value="1"/>
</dbReference>
<dbReference type="Pfam" id="PF02617">
    <property type="entry name" value="ClpS"/>
    <property type="match status" value="1"/>
</dbReference>
<dbReference type="SUPFAM" id="SSF54736">
    <property type="entry name" value="ClpS-like"/>
    <property type="match status" value="1"/>
</dbReference>
<feature type="chain" id="PRO_1000115479" description="ATP-dependent Clp protease adapter protein ClpS">
    <location>
        <begin position="1"/>
        <end position="108"/>
    </location>
</feature>
<feature type="region of interest" description="Disordered" evidence="2">
    <location>
        <begin position="1"/>
        <end position="24"/>
    </location>
</feature>
<feature type="compositionally biased region" description="Basic and acidic residues" evidence="2">
    <location>
        <begin position="1"/>
        <end position="15"/>
    </location>
</feature>
<organism>
    <name type="scientific">Stenotrophomonas maltophilia (strain R551-3)</name>
    <dbReference type="NCBI Taxonomy" id="391008"/>
    <lineage>
        <taxon>Bacteria</taxon>
        <taxon>Pseudomonadati</taxon>
        <taxon>Pseudomonadota</taxon>
        <taxon>Gammaproteobacteria</taxon>
        <taxon>Lysobacterales</taxon>
        <taxon>Lysobacteraceae</taxon>
        <taxon>Stenotrophomonas</taxon>
        <taxon>Stenotrophomonas maltophilia group</taxon>
    </lineage>
</organism>
<protein>
    <recommendedName>
        <fullName evidence="1">ATP-dependent Clp protease adapter protein ClpS</fullName>
    </recommendedName>
</protein>
<accession>B4SIN7</accession>
<reference key="1">
    <citation type="submission" date="2008-06" db="EMBL/GenBank/DDBJ databases">
        <title>Complete sequence of Stenotrophomonas maltophilia R551-3.</title>
        <authorList>
            <consortium name="US DOE Joint Genome Institute"/>
            <person name="Lucas S."/>
            <person name="Copeland A."/>
            <person name="Lapidus A."/>
            <person name="Glavina del Rio T."/>
            <person name="Dalin E."/>
            <person name="Tice H."/>
            <person name="Pitluck S."/>
            <person name="Chain P."/>
            <person name="Malfatti S."/>
            <person name="Shin M."/>
            <person name="Vergez L."/>
            <person name="Lang D."/>
            <person name="Schmutz J."/>
            <person name="Larimer F."/>
            <person name="Land M."/>
            <person name="Hauser L."/>
            <person name="Kyrpides N."/>
            <person name="Mikhailova N."/>
            <person name="Taghavi S."/>
            <person name="Monchy S."/>
            <person name="Newman L."/>
            <person name="Vangronsveld J."/>
            <person name="van der Lelie D."/>
            <person name="Richardson P."/>
        </authorList>
    </citation>
    <scope>NUCLEOTIDE SEQUENCE [LARGE SCALE GENOMIC DNA]</scope>
    <source>
        <strain>R551-3</strain>
    </source>
</reference>
<comment type="function">
    <text evidence="1">Involved in the modulation of the specificity of the ClpAP-mediated ATP-dependent protein degradation.</text>
</comment>
<comment type="subunit">
    <text evidence="1">Binds to the N-terminal domain of the chaperone ClpA.</text>
</comment>
<comment type="similarity">
    <text evidence="1">Belongs to the ClpS family.</text>
</comment>